<proteinExistence type="evidence at protein level"/>
<name>APOA1_MOUSE</name>
<protein>
    <recommendedName>
        <fullName>Apolipoprotein A-I</fullName>
        <shortName>Apo-AI</shortName>
        <shortName>ApoA-I</shortName>
    </recommendedName>
    <alternativeName>
        <fullName>Apolipoprotein A1</fullName>
    </alternativeName>
    <component>
        <recommendedName>
            <fullName>Proapolipoprotein A-I</fullName>
            <shortName>ProapoA-I</shortName>
        </recommendedName>
    </component>
    <component>
        <recommendedName>
            <fullName>Truncated apolipoprotein A-I</fullName>
        </recommendedName>
    </component>
</protein>
<feature type="signal peptide" evidence="1">
    <location>
        <begin position="1"/>
        <end position="18"/>
    </location>
</feature>
<feature type="chain" id="PRO_0000425326" description="Proapolipoprotein A-I">
    <location>
        <begin position="19"/>
        <end position="264"/>
    </location>
</feature>
<feature type="chain" id="PRO_0000001946" description="Apolipoprotein A-I">
    <location>
        <begin position="25"/>
        <end position="264"/>
    </location>
</feature>
<feature type="chain" id="PRO_0000416576" description="Truncated apolipoprotein A-I" evidence="1">
    <location>
        <begin position="25"/>
        <end position="263"/>
    </location>
</feature>
<feature type="repeat" description="1">
    <location>
        <begin position="67"/>
        <end position="88"/>
    </location>
</feature>
<feature type="repeat" description="2">
    <location>
        <begin position="89"/>
        <end position="110"/>
    </location>
</feature>
<feature type="repeat" description="3; half-length">
    <location>
        <begin position="111"/>
        <end position="121"/>
    </location>
</feature>
<feature type="repeat" description="4">
    <location>
        <begin position="122"/>
        <end position="143"/>
    </location>
</feature>
<feature type="repeat" description="5">
    <location>
        <begin position="144"/>
        <end position="165"/>
    </location>
</feature>
<feature type="repeat" description="6">
    <location>
        <begin position="166"/>
        <end position="187"/>
    </location>
</feature>
<feature type="repeat" description="7; truncated">
    <location>
        <begin position="188"/>
        <end position="207"/>
    </location>
</feature>
<feature type="repeat" description="8">
    <location>
        <begin position="208"/>
        <end position="229"/>
    </location>
</feature>
<feature type="repeat" description="9; half-length">
    <location>
        <begin position="230"/>
        <end position="240"/>
    </location>
</feature>
<feature type="repeat" description="10">
    <location>
        <begin position="241"/>
        <end position="264"/>
    </location>
</feature>
<feature type="region of interest" description="10 X approximate tandem repeats">
    <location>
        <begin position="67"/>
        <end position="264"/>
    </location>
</feature>
<feature type="modified residue" description="Methionine sulfoxide" evidence="1">
    <location>
        <position position="109"/>
    </location>
</feature>
<feature type="modified residue" description="Methionine sulfoxide" evidence="8">
    <location>
        <position position="193"/>
    </location>
</feature>
<feature type="modified residue" description="Methionine sulfoxide" evidence="8">
    <location>
        <position position="240"/>
    </location>
</feature>
<feature type="modified residue" description="Methionine sulfoxide" evidence="8">
    <location>
        <position position="242"/>
    </location>
</feature>
<feature type="sequence variant" description="In strain: BALB/c, C3H and ICR." evidence="5 6 7 9">
    <original>QV</original>
    <variation>KA</variation>
    <location>
        <begin position="249"/>
        <end position="250"/>
    </location>
</feature>
<feature type="sequence conflict" description="In Ref. 3; AAB58424/AAB58425/AAB58426/AAB58427." evidence="10" ref="3">
    <original>A</original>
    <variation>G</variation>
    <location>
        <position position="143"/>
    </location>
</feature>
<feature type="sequence conflict" description="In Ref. 3; AAB58424/AAB58425/AAB58426/AAB58427." evidence="10" ref="3">
    <location>
        <position position="146"/>
    </location>
</feature>
<feature type="helix" evidence="11">
    <location>
        <begin position="30"/>
        <end position="71"/>
    </location>
</feature>
<feature type="turn" evidence="11">
    <location>
        <begin position="72"/>
        <end position="75"/>
    </location>
</feature>
<feature type="helix" evidence="11">
    <location>
        <begin position="83"/>
        <end position="119"/>
    </location>
</feature>
<feature type="turn" evidence="11">
    <location>
        <begin position="120"/>
        <end position="123"/>
    </location>
</feature>
<feature type="helix" evidence="11">
    <location>
        <begin position="126"/>
        <end position="141"/>
    </location>
</feature>
<feature type="helix" evidence="11">
    <location>
        <begin position="145"/>
        <end position="154"/>
    </location>
</feature>
<feature type="helix" evidence="11">
    <location>
        <begin position="167"/>
        <end position="206"/>
    </location>
</feature>
<feature type="strand" evidence="11">
    <location>
        <begin position="217"/>
        <end position="219"/>
    </location>
</feature>
<feature type="helix" evidence="11">
    <location>
        <begin position="220"/>
        <end position="226"/>
    </location>
</feature>
<feature type="helix" evidence="11">
    <location>
        <begin position="233"/>
        <end position="237"/>
    </location>
</feature>
<comment type="function">
    <text>Participates in the reverse transport of cholesterol from tissues to the liver for excretion by promoting cholesterol efflux from tissues and by acting as a cofactor for the lecithin cholesterol acyltransferase (LCAT). As part of the SPAP complex, activates spermatozoa motility.</text>
</comment>
<comment type="subunit">
    <text evidence="2 3 4">Homodimer (By similarity). Interacts with APOA1BP and CLU. Component of a sperm activating protein complex (SPAP), consisting of APOA1, an immunoglobulin heavy chain, an immunoglobulin light chain and albumin. Interacts with NDRG1. Interacts with SCGB3A2 (By similarity). Interacts with NAXE and YJEFN3 (By similarity).</text>
</comment>
<comment type="interaction">
    <interactant intactId="EBI-1634106">
        <id>Q00623</id>
    </interactant>
    <interactant intactId="EBI-1633915">
        <id>Q08460</id>
        <label>Kcnma1</label>
    </interactant>
    <organismsDiffer>false</organismsDiffer>
    <experiments>4</experiments>
</comment>
<comment type="subcellular location">
    <subcellularLocation>
        <location>Secreted</location>
    </subcellularLocation>
</comment>
<comment type="tissue specificity">
    <text>Major protein of plasma HDL, also found in chylomicrons.</text>
</comment>
<comment type="PTM">
    <text evidence="1">Glycosylated.</text>
</comment>
<comment type="PTM">
    <text evidence="1">Palmitoylated.</text>
</comment>
<comment type="PTM">
    <text>May be acylated.</text>
</comment>
<comment type="PTM">
    <text evidence="1">Phosphorylation sites are present in the extracellular medium.</text>
</comment>
<comment type="mass spectrometry" mass="27951.3" error="1.343" method="Electrospray" evidence="8">
    <molecule>Apolipoprotein A-I</molecule>
    <text>Strain C57BL/6. Without methionine sulfoxide.</text>
</comment>
<comment type="mass spectrometry" mass="27923.8" method="Electrospray" evidence="8">
    <molecule>Apolipoprotein A-I</molecule>
    <text>Strain BALB/c. Without methionine sulfoxide.</text>
</comment>
<comment type="mass spectrometry" mass="27965.0" method="Electrospray" evidence="8">
    <molecule>Apolipoprotein A-I</molecule>
    <text>Strain C57BL/6. With 1 methionine sulfoxide.</text>
</comment>
<comment type="mass spectrometry" mass="28819.7" method="Electrospray" evidence="8">
    <molecule>Proapolipoprotein A-I</molecule>
    <text>Strain C57BL/6. Without methionine sulfoxide.</text>
</comment>
<comment type="mass spectrometry" mass="28790.7" method="Electrospray" evidence="8">
    <molecule>Proapolipoprotein A-I</molecule>
    <text>Strain BALB/c. Without methionine sulfoxide.</text>
</comment>
<comment type="similarity">
    <text evidence="10">Belongs to the apolipoprotein A1/A4/E family.</text>
</comment>
<keyword id="KW-0002">3D-structure</keyword>
<keyword id="KW-0153">Cholesterol metabolism</keyword>
<keyword id="KW-0903">Direct protein sequencing</keyword>
<keyword id="KW-0325">Glycoprotein</keyword>
<keyword id="KW-0345">HDL</keyword>
<keyword id="KW-0443">Lipid metabolism</keyword>
<keyword id="KW-0445">Lipid transport</keyword>
<keyword id="KW-0449">Lipoprotein</keyword>
<keyword id="KW-0558">Oxidation</keyword>
<keyword id="KW-0564">Palmitate</keyword>
<keyword id="KW-0597">Phosphoprotein</keyword>
<keyword id="KW-1185">Reference proteome</keyword>
<keyword id="KW-0677">Repeat</keyword>
<keyword id="KW-0964">Secreted</keyword>
<keyword id="KW-0732">Signal</keyword>
<keyword id="KW-0753">Steroid metabolism</keyword>
<keyword id="KW-1207">Sterol metabolism</keyword>
<keyword id="KW-0813">Transport</keyword>
<organism>
    <name type="scientific">Mus musculus</name>
    <name type="common">Mouse</name>
    <dbReference type="NCBI Taxonomy" id="10090"/>
    <lineage>
        <taxon>Eukaryota</taxon>
        <taxon>Metazoa</taxon>
        <taxon>Chordata</taxon>
        <taxon>Craniata</taxon>
        <taxon>Vertebrata</taxon>
        <taxon>Euteleostomi</taxon>
        <taxon>Mammalia</taxon>
        <taxon>Eutheria</taxon>
        <taxon>Euarchontoglires</taxon>
        <taxon>Glires</taxon>
        <taxon>Rodentia</taxon>
        <taxon>Myomorpha</taxon>
        <taxon>Muroidea</taxon>
        <taxon>Muridae</taxon>
        <taxon>Murinae</taxon>
        <taxon>Mus</taxon>
        <taxon>Mus</taxon>
    </lineage>
</organism>
<evidence type="ECO:0000250" key="1"/>
<evidence type="ECO:0000250" key="2">
    <source>
        <dbReference type="UniProtKB" id="G5BQH5"/>
    </source>
</evidence>
<evidence type="ECO:0000250" key="3">
    <source>
        <dbReference type="UniProtKB" id="P02647"/>
    </source>
</evidence>
<evidence type="ECO:0000250" key="4">
    <source>
        <dbReference type="UniProtKB" id="P04639"/>
    </source>
</evidence>
<evidence type="ECO:0000269" key="5">
    <source>
    </source>
</evidence>
<evidence type="ECO:0000269" key="6">
    <source>
    </source>
</evidence>
<evidence type="ECO:0000269" key="7">
    <source>
    </source>
</evidence>
<evidence type="ECO:0000269" key="8">
    <source>
    </source>
</evidence>
<evidence type="ECO:0000269" key="9">
    <source ref="3"/>
</evidence>
<evidence type="ECO:0000305" key="10"/>
<evidence type="ECO:0007829" key="11">
    <source>
        <dbReference type="PDB" id="2LEM"/>
    </source>
</evidence>
<gene>
    <name type="primary">Apoa1</name>
</gene>
<dbReference type="EMBL" id="X64262">
    <property type="protein sequence ID" value="CAA45560.1"/>
    <property type="molecule type" value="mRNA"/>
</dbReference>
<dbReference type="EMBL" id="X64263">
    <property type="protein sequence ID" value="CAA45561.1"/>
    <property type="molecule type" value="Genomic_DNA"/>
</dbReference>
<dbReference type="EMBL" id="L04149">
    <property type="status" value="NOT_ANNOTATED_CDS"/>
    <property type="molecule type" value="Genomic_DNA"/>
</dbReference>
<dbReference type="EMBL" id="L04151">
    <property type="status" value="NOT_ANNOTATED_CDS"/>
    <property type="molecule type" value="mRNA"/>
</dbReference>
<dbReference type="EMBL" id="U79572">
    <property type="protein sequence ID" value="AAB58424.1"/>
    <property type="molecule type" value="Genomic_DNA"/>
</dbReference>
<dbReference type="EMBL" id="U79574">
    <property type="protein sequence ID" value="AAB58426.1"/>
    <property type="molecule type" value="Genomic_DNA"/>
</dbReference>
<dbReference type="EMBL" id="U79573">
    <property type="protein sequence ID" value="AAB58425.1"/>
    <property type="molecule type" value="Genomic_DNA"/>
</dbReference>
<dbReference type="EMBL" id="U79575">
    <property type="protein sequence ID" value="AAB58427.1"/>
    <property type="molecule type" value="Genomic_DNA"/>
</dbReference>
<dbReference type="EMBL" id="AK076187">
    <property type="protein sequence ID" value="BAC36241.1"/>
    <property type="molecule type" value="mRNA"/>
</dbReference>
<dbReference type="EMBL" id="AK149576">
    <property type="protein sequence ID" value="BAE28968.1"/>
    <property type="molecule type" value="mRNA"/>
</dbReference>
<dbReference type="EMBL" id="AK161536">
    <property type="protein sequence ID" value="BAE36448.1"/>
    <property type="molecule type" value="mRNA"/>
</dbReference>
<dbReference type="EMBL" id="AC116503">
    <property type="status" value="NOT_ANNOTATED_CDS"/>
    <property type="molecule type" value="Genomic_DNA"/>
</dbReference>
<dbReference type="EMBL" id="BC012253">
    <property type="protein sequence ID" value="AAH12253.1"/>
    <property type="molecule type" value="mRNA"/>
</dbReference>
<dbReference type="EMBL" id="BC019837">
    <property type="protein sequence ID" value="AAH19837.1"/>
    <property type="molecule type" value="mRNA"/>
</dbReference>
<dbReference type="CCDS" id="CCDS40610.1"/>
<dbReference type="PIR" id="S22420">
    <property type="entry name" value="S22420"/>
</dbReference>
<dbReference type="RefSeq" id="NP_033822.2">
    <property type="nucleotide sequence ID" value="NM_009692.4"/>
</dbReference>
<dbReference type="PDB" id="2LEM">
    <property type="method" value="NMR"/>
    <property type="chains" value="A=25-240"/>
</dbReference>
<dbReference type="PDBsum" id="2LEM"/>
<dbReference type="SASBDB" id="Q00623"/>
<dbReference type="SMR" id="Q00623"/>
<dbReference type="BioGRID" id="198155">
    <property type="interactions" value="31"/>
</dbReference>
<dbReference type="CORUM" id="Q00623"/>
<dbReference type="FunCoup" id="Q00623">
    <property type="interactions" value="312"/>
</dbReference>
<dbReference type="IntAct" id="Q00623">
    <property type="interactions" value="3"/>
</dbReference>
<dbReference type="STRING" id="10090.ENSMUSP00000034588"/>
<dbReference type="GlyGen" id="Q00623">
    <property type="glycosylation" value="1 site, 1 O-linked glycan (1 site)"/>
</dbReference>
<dbReference type="iPTMnet" id="Q00623"/>
<dbReference type="PhosphoSitePlus" id="Q00623"/>
<dbReference type="SwissPalm" id="Q00623"/>
<dbReference type="REPRODUCTION-2DPAGE" id="IPI00121209"/>
<dbReference type="REPRODUCTION-2DPAGE" id="Q00623"/>
<dbReference type="CPTAC" id="non-CPTAC-3892"/>
<dbReference type="jPOST" id="Q00623"/>
<dbReference type="PaxDb" id="10090-ENSMUSP00000034588"/>
<dbReference type="PeptideAtlas" id="Q00623"/>
<dbReference type="ProteomicsDB" id="281800"/>
<dbReference type="Antibodypedia" id="32291">
    <property type="antibodies" value="1603 antibodies from 48 providers"/>
</dbReference>
<dbReference type="DNASU" id="11806"/>
<dbReference type="Ensembl" id="ENSMUST00000034588.9">
    <property type="protein sequence ID" value="ENSMUSP00000034588.9"/>
    <property type="gene ID" value="ENSMUSG00000032083.9"/>
</dbReference>
<dbReference type="GeneID" id="11806"/>
<dbReference type="KEGG" id="mmu:11806"/>
<dbReference type="UCSC" id="uc009phb.3">
    <property type="organism name" value="mouse"/>
</dbReference>
<dbReference type="AGR" id="MGI:88049"/>
<dbReference type="CTD" id="335"/>
<dbReference type="MGI" id="MGI:88049">
    <property type="gene designation" value="Apoa1"/>
</dbReference>
<dbReference type="VEuPathDB" id="HostDB:ENSMUSG00000032083"/>
<dbReference type="eggNOG" id="ENOG502S1XQ">
    <property type="taxonomic scope" value="Eukaryota"/>
</dbReference>
<dbReference type="GeneTree" id="ENSGT00950000182929"/>
<dbReference type="HOGENOM" id="CLU_058447_1_0_1"/>
<dbReference type="InParanoid" id="Q00623"/>
<dbReference type="OMA" id="EYVAQFE"/>
<dbReference type="OrthoDB" id="8727817at2759"/>
<dbReference type="PhylomeDB" id="Q00623"/>
<dbReference type="TreeFam" id="TF334458"/>
<dbReference type="Reactome" id="R-MMU-114608">
    <property type="pathway name" value="Platelet degranulation"/>
</dbReference>
<dbReference type="Reactome" id="R-MMU-1369062">
    <property type="pathway name" value="ABC transporters in lipid homeostasis"/>
</dbReference>
<dbReference type="Reactome" id="R-MMU-2168880">
    <property type="pathway name" value="Scavenging of heme from plasma"/>
</dbReference>
<dbReference type="Reactome" id="R-MMU-3000471">
    <property type="pathway name" value="Scavenging by Class B Receptors"/>
</dbReference>
<dbReference type="Reactome" id="R-MMU-3000480">
    <property type="pathway name" value="Scavenging by Class A Receptors"/>
</dbReference>
<dbReference type="Reactome" id="R-MMU-381426">
    <property type="pathway name" value="Regulation of Insulin-like Growth Factor (IGF) transport and uptake by Insulin-like Growth Factor Binding Proteins (IGFBPs)"/>
</dbReference>
<dbReference type="Reactome" id="R-MMU-8957275">
    <property type="pathway name" value="Post-translational protein phosphorylation"/>
</dbReference>
<dbReference type="Reactome" id="R-MMU-8963888">
    <property type="pathway name" value="Chylomicron assembly"/>
</dbReference>
<dbReference type="Reactome" id="R-MMU-8963896">
    <property type="pathway name" value="HDL assembly"/>
</dbReference>
<dbReference type="Reactome" id="R-MMU-8963901">
    <property type="pathway name" value="Chylomicron remodeling"/>
</dbReference>
<dbReference type="Reactome" id="R-MMU-8964011">
    <property type="pathway name" value="HDL clearance"/>
</dbReference>
<dbReference type="Reactome" id="R-MMU-8964058">
    <property type="pathway name" value="HDL remodeling"/>
</dbReference>
<dbReference type="Reactome" id="R-MMU-9707616">
    <property type="pathway name" value="Heme signaling"/>
</dbReference>
<dbReference type="Reactome" id="R-MMU-975634">
    <property type="pathway name" value="Retinoid metabolism and transport"/>
</dbReference>
<dbReference type="BioGRID-ORCS" id="11806">
    <property type="hits" value="1 hit in 80 CRISPR screens"/>
</dbReference>
<dbReference type="ChiTaRS" id="Apoa1">
    <property type="organism name" value="mouse"/>
</dbReference>
<dbReference type="EvolutionaryTrace" id="Q00623"/>
<dbReference type="PRO" id="PR:Q00623"/>
<dbReference type="Proteomes" id="UP000000589">
    <property type="component" value="Chromosome 9"/>
</dbReference>
<dbReference type="RNAct" id="Q00623">
    <property type="molecule type" value="protein"/>
</dbReference>
<dbReference type="Bgee" id="ENSMUSG00000032083">
    <property type="expression patterns" value="Expressed in left lobe of liver and 103 other cell types or tissues"/>
</dbReference>
<dbReference type="ExpressionAtlas" id="Q00623">
    <property type="expression patterns" value="baseline and differential"/>
</dbReference>
<dbReference type="GO" id="GO:0005829">
    <property type="term" value="C:cytosol"/>
    <property type="evidence" value="ECO:0000304"/>
    <property type="project" value="Reactome"/>
</dbReference>
<dbReference type="GO" id="GO:0030139">
    <property type="term" value="C:endocytic vesicle"/>
    <property type="evidence" value="ECO:0007669"/>
    <property type="project" value="Ensembl"/>
</dbReference>
<dbReference type="GO" id="GO:0005576">
    <property type="term" value="C:extracellular region"/>
    <property type="evidence" value="ECO:0000314"/>
    <property type="project" value="MGI"/>
</dbReference>
<dbReference type="GO" id="GO:0005615">
    <property type="term" value="C:extracellular space"/>
    <property type="evidence" value="ECO:0000314"/>
    <property type="project" value="MGI"/>
</dbReference>
<dbReference type="GO" id="GO:0034366">
    <property type="term" value="C:spherical high-density lipoprotein particle"/>
    <property type="evidence" value="ECO:0007669"/>
    <property type="project" value="Ensembl"/>
</dbReference>
<dbReference type="GO" id="GO:0034361">
    <property type="term" value="C:very-low-density lipoprotein particle"/>
    <property type="evidence" value="ECO:0007669"/>
    <property type="project" value="Ensembl"/>
</dbReference>
<dbReference type="GO" id="GO:0001540">
    <property type="term" value="F:amyloid-beta binding"/>
    <property type="evidence" value="ECO:0007669"/>
    <property type="project" value="Ensembl"/>
</dbReference>
<dbReference type="GO" id="GO:0034191">
    <property type="term" value="F:apolipoprotein A-I receptor binding"/>
    <property type="evidence" value="ECO:0007669"/>
    <property type="project" value="Ensembl"/>
</dbReference>
<dbReference type="GO" id="GO:0045499">
    <property type="term" value="F:chemorepellent activity"/>
    <property type="evidence" value="ECO:0007669"/>
    <property type="project" value="Ensembl"/>
</dbReference>
<dbReference type="GO" id="GO:0015485">
    <property type="term" value="F:cholesterol binding"/>
    <property type="evidence" value="ECO:0007669"/>
    <property type="project" value="Ensembl"/>
</dbReference>
<dbReference type="GO" id="GO:0120020">
    <property type="term" value="F:cholesterol transfer activity"/>
    <property type="evidence" value="ECO:0000314"/>
    <property type="project" value="MGI"/>
</dbReference>
<dbReference type="GO" id="GO:0019899">
    <property type="term" value="F:enzyme binding"/>
    <property type="evidence" value="ECO:0007669"/>
    <property type="project" value="Ensembl"/>
</dbReference>
<dbReference type="GO" id="GO:0031072">
    <property type="term" value="F:heat shock protein binding"/>
    <property type="evidence" value="ECO:0007669"/>
    <property type="project" value="Ensembl"/>
</dbReference>
<dbReference type="GO" id="GO:0008035">
    <property type="term" value="F:high-density lipoprotein particle binding"/>
    <property type="evidence" value="ECO:0000314"/>
    <property type="project" value="MGI"/>
</dbReference>
<dbReference type="GO" id="GO:0070653">
    <property type="term" value="F:high-density lipoprotein particle receptor binding"/>
    <property type="evidence" value="ECO:0007669"/>
    <property type="project" value="Ensembl"/>
</dbReference>
<dbReference type="GO" id="GO:0042802">
    <property type="term" value="F:identical protein binding"/>
    <property type="evidence" value="ECO:0000353"/>
    <property type="project" value="MGI"/>
</dbReference>
<dbReference type="GO" id="GO:0008289">
    <property type="term" value="F:lipid binding"/>
    <property type="evidence" value="ECO:0000314"/>
    <property type="project" value="MGI"/>
</dbReference>
<dbReference type="GO" id="GO:0005319">
    <property type="term" value="F:lipid transporter activity"/>
    <property type="evidence" value="ECO:0000314"/>
    <property type="project" value="MGI"/>
</dbReference>
<dbReference type="GO" id="GO:0071813">
    <property type="term" value="F:lipoprotein particle binding"/>
    <property type="evidence" value="ECO:0000314"/>
    <property type="project" value="MGI"/>
</dbReference>
<dbReference type="GO" id="GO:0060228">
    <property type="term" value="F:phosphatidylcholine-sterol O-acyltransferase activator activity"/>
    <property type="evidence" value="ECO:0007669"/>
    <property type="project" value="Ensembl"/>
</dbReference>
<dbReference type="GO" id="GO:0005543">
    <property type="term" value="F:phospholipid binding"/>
    <property type="evidence" value="ECO:0007669"/>
    <property type="project" value="Ensembl"/>
</dbReference>
<dbReference type="GO" id="GO:0042803">
    <property type="term" value="F:protein homodimerization activity"/>
    <property type="evidence" value="ECO:0000250"/>
    <property type="project" value="UniProtKB"/>
</dbReference>
<dbReference type="GO" id="GO:0030325">
    <property type="term" value="P:adrenal gland development"/>
    <property type="evidence" value="ECO:0000315"/>
    <property type="project" value="MGI"/>
</dbReference>
<dbReference type="GO" id="GO:0034205">
    <property type="term" value="P:amyloid-beta formation"/>
    <property type="evidence" value="ECO:0007669"/>
    <property type="project" value="Ensembl"/>
</dbReference>
<dbReference type="GO" id="GO:0043534">
    <property type="term" value="P:blood vessel endothelial cell migration"/>
    <property type="evidence" value="ECO:0000315"/>
    <property type="project" value="MGI"/>
</dbReference>
<dbReference type="GO" id="GO:0071402">
    <property type="term" value="P:cellular response to lipoprotein particle stimulus"/>
    <property type="evidence" value="ECO:0007669"/>
    <property type="project" value="Ensembl"/>
</dbReference>
<dbReference type="GO" id="GO:0006695">
    <property type="term" value="P:cholesterol biosynthetic process"/>
    <property type="evidence" value="ECO:0000315"/>
    <property type="project" value="MGI"/>
</dbReference>
<dbReference type="GO" id="GO:0033344">
    <property type="term" value="P:cholesterol efflux"/>
    <property type="evidence" value="ECO:0000314"/>
    <property type="project" value="MGI"/>
</dbReference>
<dbReference type="GO" id="GO:0042632">
    <property type="term" value="P:cholesterol homeostasis"/>
    <property type="evidence" value="ECO:0007669"/>
    <property type="project" value="Ensembl"/>
</dbReference>
<dbReference type="GO" id="GO:0070508">
    <property type="term" value="P:cholesterol import"/>
    <property type="evidence" value="ECO:0007669"/>
    <property type="project" value="Ensembl"/>
</dbReference>
<dbReference type="GO" id="GO:0008203">
    <property type="term" value="P:cholesterol metabolic process"/>
    <property type="evidence" value="ECO:0000315"/>
    <property type="project" value="MGI"/>
</dbReference>
<dbReference type="GO" id="GO:0030301">
    <property type="term" value="P:cholesterol transport"/>
    <property type="evidence" value="ECO:0000314"/>
    <property type="project" value="MGI"/>
</dbReference>
<dbReference type="GO" id="GO:0001935">
    <property type="term" value="P:endothelial cell proliferation"/>
    <property type="evidence" value="ECO:0000315"/>
    <property type="project" value="MGI"/>
</dbReference>
<dbReference type="GO" id="GO:0007186">
    <property type="term" value="P:G protein-coupled receptor signaling pathway"/>
    <property type="evidence" value="ECO:0007669"/>
    <property type="project" value="Ensembl"/>
</dbReference>
<dbReference type="GO" id="GO:0008211">
    <property type="term" value="P:glucocorticoid metabolic process"/>
    <property type="evidence" value="ECO:0000315"/>
    <property type="project" value="MGI"/>
</dbReference>
<dbReference type="GO" id="GO:0034380">
    <property type="term" value="P:high-density lipoprotein particle assembly"/>
    <property type="evidence" value="ECO:0007669"/>
    <property type="project" value="Ensembl"/>
</dbReference>
<dbReference type="GO" id="GO:0034375">
    <property type="term" value="P:high-density lipoprotein particle remodeling"/>
    <property type="evidence" value="ECO:0007669"/>
    <property type="project" value="Ensembl"/>
</dbReference>
<dbReference type="GO" id="GO:0007229">
    <property type="term" value="P:integrin-mediated signaling pathway"/>
    <property type="evidence" value="ECO:0007669"/>
    <property type="project" value="Ensembl"/>
</dbReference>
<dbReference type="GO" id="GO:0019915">
    <property type="term" value="P:lipid storage"/>
    <property type="evidence" value="ECO:0000315"/>
    <property type="project" value="MGI"/>
</dbReference>
<dbReference type="GO" id="GO:0042158">
    <property type="term" value="P:lipoprotein biosynthetic process"/>
    <property type="evidence" value="ECO:0000315"/>
    <property type="project" value="MGI"/>
</dbReference>
<dbReference type="GO" id="GO:0060354">
    <property type="term" value="P:negative regulation of cell adhesion molecule production"/>
    <property type="evidence" value="ECO:0007669"/>
    <property type="project" value="Ensembl"/>
</dbReference>
<dbReference type="GO" id="GO:0002719">
    <property type="term" value="P:negative regulation of cytokine production involved in immune response"/>
    <property type="evidence" value="ECO:0007669"/>
    <property type="project" value="Ensembl"/>
</dbReference>
<dbReference type="GO" id="GO:0034115">
    <property type="term" value="P:negative regulation of heterotypic cell-cell adhesion"/>
    <property type="evidence" value="ECO:0007669"/>
    <property type="project" value="Ensembl"/>
</dbReference>
<dbReference type="GO" id="GO:0050728">
    <property type="term" value="P:negative regulation of inflammatory response"/>
    <property type="evidence" value="ECO:0007669"/>
    <property type="project" value="Ensembl"/>
</dbReference>
<dbReference type="GO" id="GO:0032691">
    <property type="term" value="P:negative regulation of interleukin-1 beta production"/>
    <property type="evidence" value="ECO:0007669"/>
    <property type="project" value="Ensembl"/>
</dbReference>
<dbReference type="GO" id="GO:0010804">
    <property type="term" value="P:negative regulation of tumor necrosis factor-mediated signaling pathway"/>
    <property type="evidence" value="ECO:0007669"/>
    <property type="project" value="Ensembl"/>
</dbReference>
<dbReference type="GO" id="GO:0010903">
    <property type="term" value="P:negative regulation of very-low-density lipoprotein particle remodeling"/>
    <property type="evidence" value="ECO:0007669"/>
    <property type="project" value="Ensembl"/>
</dbReference>
<dbReference type="GO" id="GO:0018206">
    <property type="term" value="P:peptidyl-methionine modification"/>
    <property type="evidence" value="ECO:0000250"/>
    <property type="project" value="UniProtKB"/>
</dbReference>
<dbReference type="GO" id="GO:0006656">
    <property type="term" value="P:phosphatidylcholine biosynthetic process"/>
    <property type="evidence" value="ECO:0007669"/>
    <property type="project" value="Ensembl"/>
</dbReference>
<dbReference type="GO" id="GO:0033700">
    <property type="term" value="P:phospholipid efflux"/>
    <property type="evidence" value="ECO:0007669"/>
    <property type="project" value="Ensembl"/>
</dbReference>
<dbReference type="GO" id="GO:0055091">
    <property type="term" value="P:phospholipid homeostasis"/>
    <property type="evidence" value="ECO:0007669"/>
    <property type="project" value="Ensembl"/>
</dbReference>
<dbReference type="GO" id="GO:0006644">
    <property type="term" value="P:phospholipid metabolic process"/>
    <property type="evidence" value="ECO:0000315"/>
    <property type="project" value="MGI"/>
</dbReference>
<dbReference type="GO" id="GO:0010875">
    <property type="term" value="P:positive regulation of cholesterol efflux"/>
    <property type="evidence" value="ECO:0000250"/>
    <property type="project" value="UniProtKB"/>
</dbReference>
<dbReference type="GO" id="GO:0090205">
    <property type="term" value="P:positive regulation of cholesterol metabolic process"/>
    <property type="evidence" value="ECO:0007669"/>
    <property type="project" value="Ensembl"/>
</dbReference>
<dbReference type="GO" id="GO:0050766">
    <property type="term" value="P:positive regulation of phagocytosis"/>
    <property type="evidence" value="ECO:0000250"/>
    <property type="project" value="UniProtKB"/>
</dbReference>
<dbReference type="GO" id="GO:1902995">
    <property type="term" value="P:positive regulation of phospholipid efflux"/>
    <property type="evidence" value="ECO:0000250"/>
    <property type="project" value="UniProtKB"/>
</dbReference>
<dbReference type="GO" id="GO:0035025">
    <property type="term" value="P:positive regulation of Rho protein signal transduction"/>
    <property type="evidence" value="ECO:0007669"/>
    <property type="project" value="Ensembl"/>
</dbReference>
<dbReference type="GO" id="GO:0051496">
    <property type="term" value="P:positive regulation of stress fiber assembly"/>
    <property type="evidence" value="ECO:0007669"/>
    <property type="project" value="Ensembl"/>
</dbReference>
<dbReference type="GO" id="GO:1900026">
    <property type="term" value="P:positive regulation of substrate adhesion-dependent cell spreading"/>
    <property type="evidence" value="ECO:0007669"/>
    <property type="project" value="Ensembl"/>
</dbReference>
<dbReference type="GO" id="GO:0018158">
    <property type="term" value="P:protein oxidation"/>
    <property type="evidence" value="ECO:0000250"/>
    <property type="project" value="UniProtKB"/>
</dbReference>
<dbReference type="GO" id="GO:0050821">
    <property type="term" value="P:protein stabilization"/>
    <property type="evidence" value="ECO:0000250"/>
    <property type="project" value="UniProtKB"/>
</dbReference>
<dbReference type="GO" id="GO:0032489">
    <property type="term" value="P:regulation of Cdc42 protein signal transduction"/>
    <property type="evidence" value="ECO:0007669"/>
    <property type="project" value="Ensembl"/>
</dbReference>
<dbReference type="GO" id="GO:0030300">
    <property type="term" value="P:regulation of intestinal cholesterol absorption"/>
    <property type="evidence" value="ECO:0000314"/>
    <property type="project" value="MGI"/>
</dbReference>
<dbReference type="GO" id="GO:0043691">
    <property type="term" value="P:reverse cholesterol transport"/>
    <property type="evidence" value="ECO:0007669"/>
    <property type="project" value="Ensembl"/>
</dbReference>
<dbReference type="GO" id="GO:0070328">
    <property type="term" value="P:triglyceride homeostasis"/>
    <property type="evidence" value="ECO:0007669"/>
    <property type="project" value="Ensembl"/>
</dbReference>
<dbReference type="GO" id="GO:0051180">
    <property type="term" value="P:vitamin transport"/>
    <property type="evidence" value="ECO:0007669"/>
    <property type="project" value="Ensembl"/>
</dbReference>
<dbReference type="FunFam" id="1.20.120.20:FF:000001">
    <property type="entry name" value="Apolipoprotein A-I"/>
    <property type="match status" value="1"/>
</dbReference>
<dbReference type="FunFam" id="1.20.5.20:FF:000001">
    <property type="entry name" value="apolipoprotein A-I"/>
    <property type="match status" value="1"/>
</dbReference>
<dbReference type="Gene3D" id="1.20.5.20">
    <property type="match status" value="1"/>
</dbReference>
<dbReference type="Gene3D" id="6.10.140.380">
    <property type="match status" value="1"/>
</dbReference>
<dbReference type="Gene3D" id="1.20.120.20">
    <property type="entry name" value="Apolipoprotein"/>
    <property type="match status" value="1"/>
</dbReference>
<dbReference type="InterPro" id="IPR000074">
    <property type="entry name" value="ApoA_E"/>
</dbReference>
<dbReference type="InterPro" id="IPR050163">
    <property type="entry name" value="Apolipoprotein_A1/A4/E"/>
</dbReference>
<dbReference type="PANTHER" id="PTHR18976">
    <property type="entry name" value="APOLIPOPROTEIN"/>
    <property type="match status" value="1"/>
</dbReference>
<dbReference type="PANTHER" id="PTHR18976:SF11">
    <property type="entry name" value="APOLIPOPROTEIN A-I"/>
    <property type="match status" value="1"/>
</dbReference>
<dbReference type="Pfam" id="PF01442">
    <property type="entry name" value="Apolipoprotein"/>
    <property type="match status" value="1"/>
</dbReference>
<dbReference type="SUPFAM" id="SSF58113">
    <property type="entry name" value="Apolipoprotein A-I"/>
    <property type="match status" value="1"/>
</dbReference>
<sequence length="264" mass="30616">MKAVVLAVALVFLTGSQAWHVWQQDEPQSQWDKVKDFANVYVDAVKDSGRDYVSQFESSSLGQQLNLNLLENWDTLGSTVSQLQERLGPLTRDFWDNLEKETDWVRQEMNKDLEEVKQKVQPYLDEFQKKWKEDVELYRQKVAPLGAELQESARQKLQELQGRLSPVAEEFRDRMRTHVDSLRTQLAPHSEQMRESLAQRLAELKSNPTLNEYHTRAKTHLKTLGEKARPALEDLRHSLMPMLETLKTQVQSVIDKASETLTAQ</sequence>
<accession>Q00623</accession>
<accession>O08855</accession>
<accession>O09042</accession>
<accession>Q8BPD5</accession>
<reference key="1">
    <citation type="journal article" date="1992" name="Biol. Chem. Hoppe-Seyler">
        <title>Mouse apolipoprotein AI. cDNA-derived primary structure, gene organisation and complete nucleotide sequence.</title>
        <authorList>
            <person name="Stoffel W."/>
            <person name="Mueller R."/>
            <person name="Binczek E."/>
            <person name="Hofmann K."/>
        </authorList>
    </citation>
    <scope>NUCLEOTIDE SEQUENCE [GENOMIC DNA / MRNA]</scope>
    <scope>VARIANT 249-GLN-VAL-250 DELINS LYS-ALA</scope>
</reference>
<reference key="2">
    <citation type="journal article" date="1992" name="Genomics">
        <title>Characterization of the mouse apolipoprotein Apoa-1/Apoc-3 gene locus: genomic, mRNA, and protein sequences with comparisons to other species.</title>
        <authorList>
            <person name="Januzzi J.L."/>
            <person name="Azrolan N."/>
            <person name="O'Connell A."/>
            <person name="Aalto-Setala K."/>
            <person name="Breslow J.L."/>
        </authorList>
    </citation>
    <scope>NUCLEOTIDE SEQUENCE [GENOMIC DNA / MRNA]</scope>
    <scope>VARIANT 249-GLN-VAL-250 DELINS LYS-ALA</scope>
</reference>
<reference key="3">
    <citation type="submission" date="1996-11" db="EMBL/GenBank/DDBJ databases">
        <authorList>
            <person name="Chiang A.-N."/>
            <person name="Fan K.-C."/>
            <person name="Shaw G.-C."/>
            <person name="Yang U.-C."/>
        </authorList>
    </citation>
    <scope>NUCLEOTIDE SEQUENCE [MRNA]</scope>
    <scope>VARIANT 249-GLN-VAL-250 DELINS LYS-ALA</scope>
    <source>
        <strain>BALB/cJ</strain>
        <strain>C3H/HeJ</strain>
        <strain>C57BL/6J</strain>
        <strain>ICR</strain>
        <tissue>Spleen</tissue>
    </source>
</reference>
<reference key="4">
    <citation type="journal article" date="2005" name="Science">
        <title>The transcriptional landscape of the mammalian genome.</title>
        <authorList>
            <person name="Carninci P."/>
            <person name="Kasukawa T."/>
            <person name="Katayama S."/>
            <person name="Gough J."/>
            <person name="Frith M.C."/>
            <person name="Maeda N."/>
            <person name="Oyama R."/>
            <person name="Ravasi T."/>
            <person name="Lenhard B."/>
            <person name="Wells C."/>
            <person name="Kodzius R."/>
            <person name="Shimokawa K."/>
            <person name="Bajic V.B."/>
            <person name="Brenner S.E."/>
            <person name="Batalov S."/>
            <person name="Forrest A.R."/>
            <person name="Zavolan M."/>
            <person name="Davis M.J."/>
            <person name="Wilming L.G."/>
            <person name="Aidinis V."/>
            <person name="Allen J.E."/>
            <person name="Ambesi-Impiombato A."/>
            <person name="Apweiler R."/>
            <person name="Aturaliya R.N."/>
            <person name="Bailey T.L."/>
            <person name="Bansal M."/>
            <person name="Baxter L."/>
            <person name="Beisel K.W."/>
            <person name="Bersano T."/>
            <person name="Bono H."/>
            <person name="Chalk A.M."/>
            <person name="Chiu K.P."/>
            <person name="Choudhary V."/>
            <person name="Christoffels A."/>
            <person name="Clutterbuck D.R."/>
            <person name="Crowe M.L."/>
            <person name="Dalla E."/>
            <person name="Dalrymple B.P."/>
            <person name="de Bono B."/>
            <person name="Della Gatta G."/>
            <person name="di Bernardo D."/>
            <person name="Down T."/>
            <person name="Engstrom P."/>
            <person name="Fagiolini M."/>
            <person name="Faulkner G."/>
            <person name="Fletcher C.F."/>
            <person name="Fukushima T."/>
            <person name="Furuno M."/>
            <person name="Futaki S."/>
            <person name="Gariboldi M."/>
            <person name="Georgii-Hemming P."/>
            <person name="Gingeras T.R."/>
            <person name="Gojobori T."/>
            <person name="Green R.E."/>
            <person name="Gustincich S."/>
            <person name="Harbers M."/>
            <person name="Hayashi Y."/>
            <person name="Hensch T.K."/>
            <person name="Hirokawa N."/>
            <person name="Hill D."/>
            <person name="Huminiecki L."/>
            <person name="Iacono M."/>
            <person name="Ikeo K."/>
            <person name="Iwama A."/>
            <person name="Ishikawa T."/>
            <person name="Jakt M."/>
            <person name="Kanapin A."/>
            <person name="Katoh M."/>
            <person name="Kawasawa Y."/>
            <person name="Kelso J."/>
            <person name="Kitamura H."/>
            <person name="Kitano H."/>
            <person name="Kollias G."/>
            <person name="Krishnan S.P."/>
            <person name="Kruger A."/>
            <person name="Kummerfeld S.K."/>
            <person name="Kurochkin I.V."/>
            <person name="Lareau L.F."/>
            <person name="Lazarevic D."/>
            <person name="Lipovich L."/>
            <person name="Liu J."/>
            <person name="Liuni S."/>
            <person name="McWilliam S."/>
            <person name="Madan Babu M."/>
            <person name="Madera M."/>
            <person name="Marchionni L."/>
            <person name="Matsuda H."/>
            <person name="Matsuzawa S."/>
            <person name="Miki H."/>
            <person name="Mignone F."/>
            <person name="Miyake S."/>
            <person name="Morris K."/>
            <person name="Mottagui-Tabar S."/>
            <person name="Mulder N."/>
            <person name="Nakano N."/>
            <person name="Nakauchi H."/>
            <person name="Ng P."/>
            <person name="Nilsson R."/>
            <person name="Nishiguchi S."/>
            <person name="Nishikawa S."/>
            <person name="Nori F."/>
            <person name="Ohara O."/>
            <person name="Okazaki Y."/>
            <person name="Orlando V."/>
            <person name="Pang K.C."/>
            <person name="Pavan W.J."/>
            <person name="Pavesi G."/>
            <person name="Pesole G."/>
            <person name="Petrovsky N."/>
            <person name="Piazza S."/>
            <person name="Reed J."/>
            <person name="Reid J.F."/>
            <person name="Ring B.Z."/>
            <person name="Ringwald M."/>
            <person name="Rost B."/>
            <person name="Ruan Y."/>
            <person name="Salzberg S.L."/>
            <person name="Sandelin A."/>
            <person name="Schneider C."/>
            <person name="Schoenbach C."/>
            <person name="Sekiguchi K."/>
            <person name="Semple C.A."/>
            <person name="Seno S."/>
            <person name="Sessa L."/>
            <person name="Sheng Y."/>
            <person name="Shibata Y."/>
            <person name="Shimada H."/>
            <person name="Shimada K."/>
            <person name="Silva D."/>
            <person name="Sinclair B."/>
            <person name="Sperling S."/>
            <person name="Stupka E."/>
            <person name="Sugiura K."/>
            <person name="Sultana R."/>
            <person name="Takenaka Y."/>
            <person name="Taki K."/>
            <person name="Tammoja K."/>
            <person name="Tan S.L."/>
            <person name="Tang S."/>
            <person name="Taylor M.S."/>
            <person name="Tegner J."/>
            <person name="Teichmann S.A."/>
            <person name="Ueda H.R."/>
            <person name="van Nimwegen E."/>
            <person name="Verardo R."/>
            <person name="Wei C.L."/>
            <person name="Yagi K."/>
            <person name="Yamanishi H."/>
            <person name="Zabarovsky E."/>
            <person name="Zhu S."/>
            <person name="Zimmer A."/>
            <person name="Hide W."/>
            <person name="Bult C."/>
            <person name="Grimmond S.M."/>
            <person name="Teasdale R.D."/>
            <person name="Liu E.T."/>
            <person name="Brusic V."/>
            <person name="Quackenbush J."/>
            <person name="Wahlestedt C."/>
            <person name="Mattick J.S."/>
            <person name="Hume D.A."/>
            <person name="Kai C."/>
            <person name="Sasaki D."/>
            <person name="Tomaru Y."/>
            <person name="Fukuda S."/>
            <person name="Kanamori-Katayama M."/>
            <person name="Suzuki M."/>
            <person name="Aoki J."/>
            <person name="Arakawa T."/>
            <person name="Iida J."/>
            <person name="Imamura K."/>
            <person name="Itoh M."/>
            <person name="Kato T."/>
            <person name="Kawaji H."/>
            <person name="Kawagashira N."/>
            <person name="Kawashima T."/>
            <person name="Kojima M."/>
            <person name="Kondo S."/>
            <person name="Konno H."/>
            <person name="Nakano K."/>
            <person name="Ninomiya N."/>
            <person name="Nishio T."/>
            <person name="Okada M."/>
            <person name="Plessy C."/>
            <person name="Shibata K."/>
            <person name="Shiraki T."/>
            <person name="Suzuki S."/>
            <person name="Tagami M."/>
            <person name="Waki K."/>
            <person name="Watahiki A."/>
            <person name="Okamura-Oho Y."/>
            <person name="Suzuki H."/>
            <person name="Kawai J."/>
            <person name="Hayashizaki Y."/>
        </authorList>
    </citation>
    <scope>NUCLEOTIDE SEQUENCE [LARGE SCALE MRNA]</scope>
    <source>
        <strain>C57BL/6J</strain>
        <tissue>Liver</tissue>
        <tissue>Ovary</tissue>
        <tissue>Placenta</tissue>
        <tissue>Uterus</tissue>
    </source>
</reference>
<reference key="5">
    <citation type="journal article" date="2009" name="PLoS Biol.">
        <title>Lineage-specific biology revealed by a finished genome assembly of the mouse.</title>
        <authorList>
            <person name="Church D.M."/>
            <person name="Goodstadt L."/>
            <person name="Hillier L.W."/>
            <person name="Zody M.C."/>
            <person name="Goldstein S."/>
            <person name="She X."/>
            <person name="Bult C.J."/>
            <person name="Agarwala R."/>
            <person name="Cherry J.L."/>
            <person name="DiCuccio M."/>
            <person name="Hlavina W."/>
            <person name="Kapustin Y."/>
            <person name="Meric P."/>
            <person name="Maglott D."/>
            <person name="Birtle Z."/>
            <person name="Marques A.C."/>
            <person name="Graves T."/>
            <person name="Zhou S."/>
            <person name="Teague B."/>
            <person name="Potamousis K."/>
            <person name="Churas C."/>
            <person name="Place M."/>
            <person name="Herschleb J."/>
            <person name="Runnheim R."/>
            <person name="Forrest D."/>
            <person name="Amos-Landgraf J."/>
            <person name="Schwartz D.C."/>
            <person name="Cheng Z."/>
            <person name="Lindblad-Toh K."/>
            <person name="Eichler E.E."/>
            <person name="Ponting C.P."/>
        </authorList>
    </citation>
    <scope>NUCLEOTIDE SEQUENCE [LARGE SCALE GENOMIC DNA]</scope>
    <source>
        <strain>C57BL/6J</strain>
    </source>
</reference>
<reference key="6">
    <citation type="journal article" date="2004" name="Genome Res.">
        <title>The status, quality, and expansion of the NIH full-length cDNA project: the Mammalian Gene Collection (MGC).</title>
        <authorList>
            <consortium name="The MGC Project Team"/>
        </authorList>
    </citation>
    <scope>NUCLEOTIDE SEQUENCE [LARGE SCALE MRNA]</scope>
    <scope>VARIANT 249-GLN-VAL-250 DELINS LYS-ALA</scope>
    <source>
        <strain>FVB/N</strain>
        <tissue>Liver</tissue>
    </source>
</reference>
<reference key="7">
    <citation type="journal article" date="2006" name="Biochim. Biophys. Acta">
        <title>Mass spectral analysis of the apolipoproteins on mouse high density lipoproteins. Detection of post-translational modifications.</title>
        <authorList>
            <person name="Puppione D.L."/>
            <person name="Yam L.M."/>
            <person name="Bassilian S."/>
            <person name="Souda P."/>
            <person name="Castellani L.W."/>
            <person name="Schumaker V.N."/>
            <person name="Whitelegge J.P."/>
        </authorList>
    </citation>
    <scope>PROTEIN SEQUENCE OF 19-46; 93-106; 120-129; 131-139; 142-154; 157-172; 177-194; 201-216 AND 223-256</scope>
    <scope>MASS SPECTROMETRY</scope>
    <scope>OXIDATION AT MET-193; MET-240 AND MET-242</scope>
</reference>
<reference key="8">
    <citation type="journal article" date="2010" name="Cell">
        <title>A tissue-specific atlas of mouse protein phosphorylation and expression.</title>
        <authorList>
            <person name="Huttlin E.L."/>
            <person name="Jedrychowski M.P."/>
            <person name="Elias J.E."/>
            <person name="Goswami T."/>
            <person name="Rad R."/>
            <person name="Beausoleil S.A."/>
            <person name="Villen J."/>
            <person name="Haas W."/>
            <person name="Sowa M.E."/>
            <person name="Gygi S.P."/>
        </authorList>
    </citation>
    <scope>IDENTIFICATION BY MASS SPECTROMETRY [LARGE SCALE ANALYSIS]</scope>
    <source>
        <tissue>Brain</tissue>
        <tissue>Brown adipose tissue</tissue>
        <tissue>Heart</tissue>
        <tissue>Kidney</tissue>
        <tissue>Liver</tissue>
        <tissue>Lung</tissue>
        <tissue>Pancreas</tissue>
        <tissue>Spleen</tissue>
        <tissue>Testis</tissue>
    </source>
</reference>